<evidence type="ECO:0000250" key="1"/>
<evidence type="ECO:0000305" key="2"/>
<sequence>MAESKLVIGDRSFASRLIMGTGGATNLAVLEQALIASGTELTTVAIRRVDADGGTGLLDLLNRLGITPLPNTAGCRSAAEAVLTAQLAREALNTNWVKLEVIADERTLWPDAVELVRAAEQLVDDGFVVLPYTTDDPVLARRLEDTGCAAVMPLGSPIGTGLGIANPHNIEMIVAGARVPVVLDAGIGTASDAALAMELGCDAVLLASAVTRAADPPAMAAAMAAAVTAGYLARCAGRIPKRFWAQASSPAR</sequence>
<feature type="chain" id="PRO_0000162829" description="Thiazole synthase">
    <location>
        <begin position="1"/>
        <end position="252"/>
    </location>
</feature>
<feature type="active site" description="Schiff-base intermediate with DXP" evidence="1">
    <location>
        <position position="98"/>
    </location>
</feature>
<feature type="binding site" evidence="1">
    <location>
        <position position="159"/>
    </location>
    <ligand>
        <name>1-deoxy-D-xylulose 5-phosphate</name>
        <dbReference type="ChEBI" id="CHEBI:57792"/>
    </ligand>
</feature>
<feature type="binding site" evidence="1">
    <location>
        <begin position="185"/>
        <end position="186"/>
    </location>
    <ligand>
        <name>1-deoxy-D-xylulose 5-phosphate</name>
        <dbReference type="ChEBI" id="CHEBI:57792"/>
    </ligand>
</feature>
<feature type="binding site" evidence="1">
    <location>
        <begin position="207"/>
        <end position="208"/>
    </location>
    <ligand>
        <name>1-deoxy-D-xylulose 5-phosphate</name>
        <dbReference type="ChEBI" id="CHEBI:57792"/>
    </ligand>
</feature>
<accession>P59948</accession>
<accession>A0A1R3XV93</accession>
<accession>X2BF00</accession>
<proteinExistence type="inferred from homology"/>
<reference key="1">
    <citation type="journal article" date="2003" name="Proc. Natl. Acad. Sci. U.S.A.">
        <title>The complete genome sequence of Mycobacterium bovis.</title>
        <authorList>
            <person name="Garnier T."/>
            <person name="Eiglmeier K."/>
            <person name="Camus J.-C."/>
            <person name="Medina N."/>
            <person name="Mansoor H."/>
            <person name="Pryor M."/>
            <person name="Duthoy S."/>
            <person name="Grondin S."/>
            <person name="Lacroix C."/>
            <person name="Monsempe C."/>
            <person name="Simon S."/>
            <person name="Harris B."/>
            <person name="Atkin R."/>
            <person name="Doggett J."/>
            <person name="Mayes R."/>
            <person name="Keating L."/>
            <person name="Wheeler P.R."/>
            <person name="Parkhill J."/>
            <person name="Barrell B.G."/>
            <person name="Cole S.T."/>
            <person name="Gordon S.V."/>
            <person name="Hewinson R.G."/>
        </authorList>
    </citation>
    <scope>NUCLEOTIDE SEQUENCE [LARGE SCALE GENOMIC DNA]</scope>
    <source>
        <strain>ATCC BAA-935 / AF2122/97</strain>
    </source>
</reference>
<reference key="2">
    <citation type="journal article" date="2017" name="Genome Announc.">
        <title>Updated reference genome sequence and annotation of Mycobacterium bovis AF2122/97.</title>
        <authorList>
            <person name="Malone K.M."/>
            <person name="Farrell D."/>
            <person name="Stuber T.P."/>
            <person name="Schubert O.T."/>
            <person name="Aebersold R."/>
            <person name="Robbe-Austerman S."/>
            <person name="Gordon S.V."/>
        </authorList>
    </citation>
    <scope>NUCLEOTIDE SEQUENCE [LARGE SCALE GENOMIC DNA]</scope>
    <scope>GENOME REANNOTATION</scope>
    <source>
        <strain>ATCC BAA-935 / AF2122/97</strain>
    </source>
</reference>
<comment type="function">
    <text evidence="1">Catalyzes the rearrangement of 1-deoxy-D-xylulose 5-phosphate (DXP) to produce the thiazole phosphate moiety of thiamine. Sulfur is provided by the thiocarboxylate moiety of the carrier protein ThiS. In vitro, sulfur can be provided by H(2)S.</text>
</comment>
<comment type="catalytic activity">
    <reaction>
        <text>[ThiS sulfur-carrier protein]-C-terminal-Gly-aminoethanethioate + 2-iminoacetate + 1-deoxy-D-xylulose 5-phosphate = [ThiS sulfur-carrier protein]-C-terminal Gly-Gly + 2-[(2R,5Z)-2-carboxy-4-methylthiazol-5(2H)-ylidene]ethyl phosphate + 2 H2O + H(+)</text>
        <dbReference type="Rhea" id="RHEA:26297"/>
        <dbReference type="Rhea" id="RHEA-COMP:12909"/>
        <dbReference type="Rhea" id="RHEA-COMP:19908"/>
        <dbReference type="ChEBI" id="CHEBI:15377"/>
        <dbReference type="ChEBI" id="CHEBI:15378"/>
        <dbReference type="ChEBI" id="CHEBI:57792"/>
        <dbReference type="ChEBI" id="CHEBI:62899"/>
        <dbReference type="ChEBI" id="CHEBI:77846"/>
        <dbReference type="ChEBI" id="CHEBI:90778"/>
        <dbReference type="ChEBI" id="CHEBI:232372"/>
        <dbReference type="EC" id="2.8.1.10"/>
    </reaction>
</comment>
<comment type="pathway">
    <text>Cofactor biosynthesis; thiamine diphosphate biosynthesis.</text>
</comment>
<comment type="subunit">
    <text evidence="1">Homotetramer. Forms heterodimers with either ThiH or ThiS (By similarity).</text>
</comment>
<comment type="subcellular location">
    <subcellularLocation>
        <location evidence="1">Cytoplasm</location>
    </subcellularLocation>
</comment>
<comment type="similarity">
    <text evidence="2">Belongs to the ThiG family.</text>
</comment>
<keyword id="KW-0963">Cytoplasm</keyword>
<keyword id="KW-1185">Reference proteome</keyword>
<keyword id="KW-0704">Schiff base</keyword>
<keyword id="KW-0784">Thiamine biosynthesis</keyword>
<keyword id="KW-0808">Transferase</keyword>
<name>THIG_MYCBO</name>
<gene>
    <name type="primary">thiG</name>
    <name type="ordered locus">BQ2027_MB0425</name>
</gene>
<organism>
    <name type="scientific">Mycobacterium bovis (strain ATCC BAA-935 / AF2122/97)</name>
    <dbReference type="NCBI Taxonomy" id="233413"/>
    <lineage>
        <taxon>Bacteria</taxon>
        <taxon>Bacillati</taxon>
        <taxon>Actinomycetota</taxon>
        <taxon>Actinomycetes</taxon>
        <taxon>Mycobacteriales</taxon>
        <taxon>Mycobacteriaceae</taxon>
        <taxon>Mycobacterium</taxon>
        <taxon>Mycobacterium tuberculosis complex</taxon>
    </lineage>
</organism>
<protein>
    <recommendedName>
        <fullName>Thiazole synthase</fullName>
        <ecNumber>2.8.1.10</ecNumber>
    </recommendedName>
</protein>
<dbReference type="EC" id="2.8.1.10"/>
<dbReference type="EMBL" id="LT708304">
    <property type="protein sequence ID" value="SIT99004.1"/>
    <property type="molecule type" value="Genomic_DNA"/>
</dbReference>
<dbReference type="RefSeq" id="NP_854088.1">
    <property type="nucleotide sequence ID" value="NC_002945.3"/>
</dbReference>
<dbReference type="RefSeq" id="WP_003402126.1">
    <property type="nucleotide sequence ID" value="NC_002945.4"/>
</dbReference>
<dbReference type="SMR" id="P59948"/>
<dbReference type="GeneID" id="45424378"/>
<dbReference type="PATRIC" id="fig|233413.5.peg.463"/>
<dbReference type="UniPathway" id="UPA00060"/>
<dbReference type="Proteomes" id="UP000001419">
    <property type="component" value="Chromosome"/>
</dbReference>
<dbReference type="GO" id="GO:0005737">
    <property type="term" value="C:cytoplasm"/>
    <property type="evidence" value="ECO:0007669"/>
    <property type="project" value="UniProtKB-SubCell"/>
</dbReference>
<dbReference type="GO" id="GO:1990107">
    <property type="term" value="F:thiazole synthase activity"/>
    <property type="evidence" value="ECO:0007669"/>
    <property type="project" value="UniProtKB-EC"/>
</dbReference>
<dbReference type="GO" id="GO:0009229">
    <property type="term" value="P:thiamine diphosphate biosynthetic process"/>
    <property type="evidence" value="ECO:0007669"/>
    <property type="project" value="UniProtKB-UniRule"/>
</dbReference>
<dbReference type="CDD" id="cd04728">
    <property type="entry name" value="ThiG"/>
    <property type="match status" value="1"/>
</dbReference>
<dbReference type="Gene3D" id="3.20.20.70">
    <property type="entry name" value="Aldolase class I"/>
    <property type="match status" value="1"/>
</dbReference>
<dbReference type="HAMAP" id="MF_00443">
    <property type="entry name" value="ThiG"/>
    <property type="match status" value="1"/>
</dbReference>
<dbReference type="InterPro" id="IPR013785">
    <property type="entry name" value="Aldolase_TIM"/>
</dbReference>
<dbReference type="InterPro" id="IPR033983">
    <property type="entry name" value="Thiazole_synthase_ThiG"/>
</dbReference>
<dbReference type="InterPro" id="IPR008867">
    <property type="entry name" value="ThiG"/>
</dbReference>
<dbReference type="PANTHER" id="PTHR34266">
    <property type="entry name" value="THIAZOLE SYNTHASE"/>
    <property type="match status" value="1"/>
</dbReference>
<dbReference type="PANTHER" id="PTHR34266:SF2">
    <property type="entry name" value="THIAZOLE SYNTHASE"/>
    <property type="match status" value="1"/>
</dbReference>
<dbReference type="Pfam" id="PF05690">
    <property type="entry name" value="ThiG"/>
    <property type="match status" value="1"/>
</dbReference>
<dbReference type="SUPFAM" id="SSF110399">
    <property type="entry name" value="ThiG-like"/>
    <property type="match status" value="1"/>
</dbReference>